<sequence>MTRVKICGLMDEYELECALKAGADALGFVVEIERSRHRLSLDEARNLIGMVPPFTTSVAVVEPAGVDDAVRLADYLQSDALQIHGDLSPEEIEEIKRRVPQRIIVAVPPGSDRAVEVSRIADAVLVDTPVSGGLGGSGRTHDWSVTARMRSTLHAPLILAGGLRPENVMDAINVVKPYAVDVSSGVETNGRKDPVKAEEFVRRVRSCQ</sequence>
<name>TRPF_METTP</name>
<dbReference type="EC" id="5.3.1.24" evidence="1"/>
<dbReference type="EMBL" id="CP000477">
    <property type="protein sequence ID" value="ABK15312.1"/>
    <property type="molecule type" value="Genomic_DNA"/>
</dbReference>
<dbReference type="RefSeq" id="WP_011696691.1">
    <property type="nucleotide sequence ID" value="NC_008553.1"/>
</dbReference>
<dbReference type="SMR" id="A0B9D8"/>
<dbReference type="STRING" id="349307.Mthe_1540"/>
<dbReference type="GeneID" id="4462522"/>
<dbReference type="KEGG" id="mtp:Mthe_1540"/>
<dbReference type="HOGENOM" id="CLU_076364_2_1_2"/>
<dbReference type="OrthoDB" id="27513at2157"/>
<dbReference type="UniPathway" id="UPA00035">
    <property type="reaction ID" value="UER00042"/>
</dbReference>
<dbReference type="Proteomes" id="UP000000674">
    <property type="component" value="Chromosome"/>
</dbReference>
<dbReference type="GO" id="GO:0004640">
    <property type="term" value="F:phosphoribosylanthranilate isomerase activity"/>
    <property type="evidence" value="ECO:0007669"/>
    <property type="project" value="UniProtKB-UniRule"/>
</dbReference>
<dbReference type="GO" id="GO:0000162">
    <property type="term" value="P:L-tryptophan biosynthetic process"/>
    <property type="evidence" value="ECO:0007669"/>
    <property type="project" value="UniProtKB-UniRule"/>
</dbReference>
<dbReference type="CDD" id="cd00405">
    <property type="entry name" value="PRAI"/>
    <property type="match status" value="1"/>
</dbReference>
<dbReference type="Gene3D" id="3.20.20.70">
    <property type="entry name" value="Aldolase class I"/>
    <property type="match status" value="1"/>
</dbReference>
<dbReference type="HAMAP" id="MF_00135">
    <property type="entry name" value="PRAI"/>
    <property type="match status" value="1"/>
</dbReference>
<dbReference type="InterPro" id="IPR013785">
    <property type="entry name" value="Aldolase_TIM"/>
</dbReference>
<dbReference type="InterPro" id="IPR001240">
    <property type="entry name" value="PRAI_dom"/>
</dbReference>
<dbReference type="InterPro" id="IPR011060">
    <property type="entry name" value="RibuloseP-bd_barrel"/>
</dbReference>
<dbReference type="InterPro" id="IPR044643">
    <property type="entry name" value="TrpF_fam"/>
</dbReference>
<dbReference type="PANTHER" id="PTHR42894">
    <property type="entry name" value="N-(5'-PHOSPHORIBOSYL)ANTHRANILATE ISOMERASE"/>
    <property type="match status" value="1"/>
</dbReference>
<dbReference type="PANTHER" id="PTHR42894:SF1">
    <property type="entry name" value="N-(5'-PHOSPHORIBOSYL)ANTHRANILATE ISOMERASE"/>
    <property type="match status" value="1"/>
</dbReference>
<dbReference type="Pfam" id="PF00697">
    <property type="entry name" value="PRAI"/>
    <property type="match status" value="1"/>
</dbReference>
<dbReference type="SUPFAM" id="SSF51366">
    <property type="entry name" value="Ribulose-phoshate binding barrel"/>
    <property type="match status" value="1"/>
</dbReference>
<gene>
    <name evidence="1" type="primary">trpF</name>
    <name type="ordered locus">Mthe_1540</name>
</gene>
<keyword id="KW-0028">Amino-acid biosynthesis</keyword>
<keyword id="KW-0057">Aromatic amino acid biosynthesis</keyword>
<keyword id="KW-0413">Isomerase</keyword>
<keyword id="KW-1185">Reference proteome</keyword>
<keyword id="KW-0822">Tryptophan biosynthesis</keyword>
<reference key="1">
    <citation type="submission" date="2006-10" db="EMBL/GenBank/DDBJ databases">
        <title>Complete sequence of Methanosaeta thermophila PT.</title>
        <authorList>
            <consortium name="US DOE Joint Genome Institute"/>
            <person name="Copeland A."/>
            <person name="Lucas S."/>
            <person name="Lapidus A."/>
            <person name="Barry K."/>
            <person name="Detter J.C."/>
            <person name="Glavina del Rio T."/>
            <person name="Hammon N."/>
            <person name="Israni S."/>
            <person name="Pitluck S."/>
            <person name="Chain P."/>
            <person name="Malfatti S."/>
            <person name="Shin M."/>
            <person name="Vergez L."/>
            <person name="Schmutz J."/>
            <person name="Larimer F."/>
            <person name="Land M."/>
            <person name="Hauser L."/>
            <person name="Kyrpides N."/>
            <person name="Kim E."/>
            <person name="Smith K.S."/>
            <person name="Ingram-Smith C."/>
            <person name="Richardson P."/>
        </authorList>
    </citation>
    <scope>NUCLEOTIDE SEQUENCE [LARGE SCALE GENOMIC DNA]</scope>
    <source>
        <strain>DSM 6194 / JCM 14653 / NBRC 101360 / PT</strain>
    </source>
</reference>
<accession>A0B9D8</accession>
<feature type="chain" id="PRO_1000018609" description="N-(5'-phosphoribosyl)anthranilate isomerase">
    <location>
        <begin position="1"/>
        <end position="208"/>
    </location>
</feature>
<proteinExistence type="inferred from homology"/>
<organism>
    <name type="scientific">Methanothrix thermoacetophila (strain DSM 6194 / JCM 14653 / NBRC 101360 / PT)</name>
    <name type="common">Methanosaeta thermophila</name>
    <dbReference type="NCBI Taxonomy" id="349307"/>
    <lineage>
        <taxon>Archaea</taxon>
        <taxon>Methanobacteriati</taxon>
        <taxon>Methanobacteriota</taxon>
        <taxon>Stenosarchaea group</taxon>
        <taxon>Methanomicrobia</taxon>
        <taxon>Methanotrichales</taxon>
        <taxon>Methanotrichaceae</taxon>
        <taxon>Methanothrix</taxon>
    </lineage>
</organism>
<protein>
    <recommendedName>
        <fullName evidence="1">N-(5'-phosphoribosyl)anthranilate isomerase</fullName>
        <shortName evidence="1">PRAI</shortName>
        <ecNumber evidence="1">5.3.1.24</ecNumber>
    </recommendedName>
</protein>
<comment type="catalytic activity">
    <reaction evidence="1">
        <text>N-(5-phospho-beta-D-ribosyl)anthranilate = 1-(2-carboxyphenylamino)-1-deoxy-D-ribulose 5-phosphate</text>
        <dbReference type="Rhea" id="RHEA:21540"/>
        <dbReference type="ChEBI" id="CHEBI:18277"/>
        <dbReference type="ChEBI" id="CHEBI:58613"/>
        <dbReference type="EC" id="5.3.1.24"/>
    </reaction>
</comment>
<comment type="pathway">
    <text evidence="1">Amino-acid biosynthesis; L-tryptophan biosynthesis; L-tryptophan from chorismate: step 3/5.</text>
</comment>
<comment type="similarity">
    <text evidence="1">Belongs to the TrpF family.</text>
</comment>
<evidence type="ECO:0000255" key="1">
    <source>
        <dbReference type="HAMAP-Rule" id="MF_00135"/>
    </source>
</evidence>